<comment type="function">
    <text evidence="4 5 6 7 8 9 10 11">Inhibitor of viral mouvements which confers resistance to some tobamoviruses including tomato mosaic virus (ToMV) (e.g. isolates L, W3 and SL-1) and tobacco mosaic virus (TMV), but not to resistance-breaking isolates (e.g. B7, LT1, LII, Ltbl, ToMV2, and ToMV1-2) ToMV and tomato brown rugose fruit virus (ToBRFV) (PubMed:15290376, PubMed:16172136, PubMed:17238011, PubMed:1730937, PubMed:21310506, PubMed:2535549, PubMed:28107419, PubMed:29582165). Elicits a hypersensitive reaction in response to avirulent (Avr) movement proteins from resistance inducing tobamoviruses (e.g. ToMV and TMV) strains, thus leading to programmed cell death (PubMed:15290376, PubMed:21310506).</text>
</comment>
<comment type="subunit">
    <text evidence="16 17">(Microbial infection) Interacts with tobamoviruses mouvement protein at the plasma membrane; this interaction triggers defense responses leading to programmed cell death.</text>
</comment>
<comment type="subunit">
    <text evidence="1">Binds to HSP90 proteins; this interaction seems required for defense responses toward tobamoviruses.</text>
</comment>
<comment type="subcellular location">
    <subcellularLocation>
        <location evidence="1">Cell membrane</location>
        <topology evidence="1">Peripheral membrane protein</topology>
        <orientation evidence="1">Cytoplasmic side</orientation>
    </subcellularLocation>
</comment>
<comment type="miscellaneous">
    <text evidence="5">Transgenic tobacco (cv. SR1) plants expressing Tm-2 exhibit resistance to tobacco mosaic virus (TMV) and tomato mosaic virus (ToMV), tobamoviruses that can multiply in tobacco (cv. SR1).</text>
</comment>
<comment type="miscellaneous">
    <text evidence="3">The Tm-2, Tm-2(2) and Tm-2nv alleles present in the tomato mosaic virus (ToMV/TMV)-resistant tomato cv. Craigella isolates GCR236 (AC Q71BH0), cv. Craigella GCR267 (AC Q71BG9) and cv. Yukang 2 (AC Q5MLE9), respectively confers resistance to ToMV but not the tm-2 allele present in the ToMV-susceptible tomato cv. Craigella isolate GCR26 (AC Q71BH1).</text>
</comment>
<comment type="similarity">
    <text evidence="15">Belongs to the disease resistance NB-LRR family.</text>
</comment>
<gene>
    <name evidence="12 13" type="primary">Tm-2</name>
</gene>
<name>TM2R_SOLLC</name>
<proteinExistence type="evidence at protein level"/>
<sequence>MAEILLTSVINKSVEIAGNLLIQEGKRLYWLKEDIDWLQREMRHIRSYVDNAKAKEAGGDSRVKNLLKDIQELAGDVEDLLDDFLPKIQQSNKFNYCLKRSSFADEFAMEIEKIKRRVVDIDRIRKTYNIIDTDNNNDDCVLLDRRRLFLHADETEIIGLDDDFNMLQAKLLNQDLHYGVVSIVGMPGLGKTTLAKKLYRLIRDQFECSGLVYVSQQPRASEILLDIAKQIGLTEQKMKENLEDNLRSLLKIKRYVFLLDDIWDVEIWDDLKLVLPECDSKVGSRIIITSRNSNVGRYIGGESSLHALQPLESEKSFELFTKKIFNFDDNNSWANASPDLVNIGRNIVGRCGGIPLAIVVTAGMLRARERTEHAWNRVLESMGHKVQDGCAKVLALSYNDLPIASRPCFLYFGLYPEDHEIRAFDLINMWIAEKFIVVNSGNRREAEDLAEDVLNDLVSRNLIQLAKRTYNGRISSCRIHDLLHSLCVDLAKESNFFHTAHDAFGDPGNVARLRRITFYSDNVMIEFFRSNPKLEKLRVLFCFAKDPSIFSHMAYFDFKLLHTLVVVMSQSFQAYVTIPSKFGNMTCLRYLRLEGNICGKLPNSIVKLTRLETIDIDRRSLIQPPSGVWESKHLRHLCYRDYGQACNSCFSISSFYPNIYSLHPNNLQTLMWIPDKFFEPRLLHRLINLRKLGILGVSNSTVKMLSIFSPVLKALEVLKLSFSSDPSEQIKLSSYPHIAKLHLNVNRTMALNSQSFPPNLIKLTLANFTVDRYILAVLKTFPKLRKLKMFICKYNEEKMDLSGEANGYSFPQLEVLHIHSPNGLSEVTCTDDVSMPKLKKLLLTGFHCRISLSERLKKLSK</sequence>
<accession>Q71BH0</accession>
<accession>C3UZH8</accession>
<accession>C3UZI4</accession>
<accession>Q5UB82</accession>
<protein>
    <recommendedName>
        <fullName evidence="12">ToMV resistance protein Tm-2(GCR236)</fullName>
    </recommendedName>
    <alternativeName>
        <fullName evidence="14">Disease resistance protein Tm-2</fullName>
    </alternativeName>
</protein>
<evidence type="ECO:0000250" key="1">
    <source>
        <dbReference type="UniProtKB" id="Q71BG9"/>
    </source>
</evidence>
<evidence type="ECO:0000255" key="2"/>
<evidence type="ECO:0000269" key="3">
    <source>
    </source>
</evidence>
<evidence type="ECO:0000269" key="4">
    <source>
    </source>
</evidence>
<evidence type="ECO:0000269" key="5">
    <source>
    </source>
</evidence>
<evidence type="ECO:0000269" key="6">
    <source>
    </source>
</evidence>
<evidence type="ECO:0000269" key="7">
    <source>
    </source>
</evidence>
<evidence type="ECO:0000269" key="8">
    <source>
    </source>
</evidence>
<evidence type="ECO:0000269" key="9">
    <source>
    </source>
</evidence>
<evidence type="ECO:0000269" key="10">
    <source>
    </source>
</evidence>
<evidence type="ECO:0000269" key="11">
    <source>
    </source>
</evidence>
<evidence type="ECO:0000303" key="12">
    <source>
    </source>
</evidence>
<evidence type="ECO:0000303" key="13">
    <source ref="2"/>
</evidence>
<evidence type="ECO:0000303" key="14">
    <source ref="3"/>
</evidence>
<evidence type="ECO:0000305" key="15"/>
<evidence type="ECO:0000305" key="16">
    <source>
    </source>
</evidence>
<evidence type="ECO:0000305" key="17">
    <source>
    </source>
</evidence>
<reference key="1">
    <citation type="journal article" date="2003" name="Plant Mol. Biol.">
        <title>Cloning and characterization of the durable tomato mosaic virus resistance gene Tm-2(2) from Lycopersicon esculentum.</title>
        <authorList>
            <person name="Lanfermeijer F.C."/>
            <person name="Dijkhuis J."/>
            <person name="Sturre M.J.G."/>
            <person name="de Haan P."/>
            <person name="Hille J."/>
        </authorList>
    </citation>
    <scope>NUCLEOTIDE SEQUENCE [GENOMIC DNA]</scope>
    <source>
        <strain>cv. Craigella GCR236</strain>
    </source>
</reference>
<reference key="2">
    <citation type="submission" date="2004-09" db="EMBL/GenBank/DDBJ databases">
        <authorList>
            <person name="Lanfermeijer F.C."/>
            <person name="ten Hoopen F."/>
            <person name="Hille J."/>
        </authorList>
    </citation>
    <scope>NUCLEOTIDE SEQUENCE [GENOMIC DNA] OF 1-17</scope>
    <source>
        <strain>cv. Craigella GCR236</strain>
    </source>
</reference>
<reference key="3">
    <citation type="submission" date="2009-03" db="EMBL/GenBank/DDBJ databases">
        <title>Development of SNP markers for disease resistance genes in tomato.</title>
        <authorList>
            <person name="Shi A."/>
            <person name="Vierling R."/>
            <person name="Grazzini R."/>
            <person name="Hogue P."/>
            <person name="Miller K."/>
        </authorList>
    </citation>
    <scope>NUCLEOTIDE SEQUENCE [GENOMIC DNA] OF 228-423 AND 594-827</scope>
    <source>
        <strain>cv. LA3432</strain>
        <strain>cv. LA3433</strain>
    </source>
</reference>
<reference key="4">
    <citation type="journal article" date="1989" name="Plant Cell">
        <title>Mutations in the tobacco mosaic virus 30-kD protein gene overcome Tm-2 resistance in tomato.</title>
        <authorList>
            <person name="Meshi T."/>
            <person name="Motoyoshi F."/>
            <person name="Maeda T."/>
            <person name="Yoshiwoka S."/>
            <person name="Watanabe H."/>
            <person name="Okada Y."/>
        </authorList>
    </citation>
    <scope>FUNCTION</scope>
    <source>
        <strain>cv. Craigella GCR236</strain>
    </source>
</reference>
<reference key="5">
    <citation type="journal article" date="1992" name="J. Gen. Virol.">
        <title>Nucleotide sequence analysis of the movement genes of resistance breaking strains of tomato mosaic virus.</title>
        <authorList>
            <person name="Calder V.L."/>
            <person name="Palukaitis P."/>
        </authorList>
    </citation>
    <scope>FUNCTION</scope>
</reference>
<reference key="6">
    <citation type="journal article" date="1995" name="Theor. Appl. Genet.">
        <title>Identification of RAPD markers linked to the Tm-2 locus in tomato.</title>
        <authorList>
            <person name="Ohmori T."/>
            <person name="Murata M."/>
            <person name="Motoyoshi F."/>
        </authorList>
    </citation>
    <scope>GENE FAMILY</scope>
    <source>
        <strain>cv. Craigella GCR236</strain>
    </source>
</reference>
<reference key="7">
    <citation type="journal article" date="1998" name="Theor. Appl. Genet.">
        <title>Characterization of disease resistance gene-like sequences in near-isogenic lines of tomato.</title>
        <authorList>
            <person name="Ohmori T."/>
            <person name="Murata M."/>
            <person name="Motoyoshi F."/>
        </authorList>
    </citation>
    <scope>GENE FAMILY</scope>
</reference>
<reference key="8">
    <citation type="journal article" date="2004" name="Arch. Virol.">
        <title>The Tomato mosaic virus 30 kDa movement protein interacts differentially with the resistance genes Tm-2 and Tm-2(2).</title>
        <authorList>
            <person name="Weber H."/>
            <person name="Ohnesorge S."/>
            <person name="Silber M.V."/>
            <person name="Pfitzner A.J.P."/>
        </authorList>
    </citation>
    <scope>FUNCTION</scope>
    <scope>SUBUNIT (MICROBIAL INFECTION)</scope>
    <source>
        <strain>cv. Craigella GCR236</strain>
    </source>
</reference>
<reference key="9">
    <citation type="journal article" date="2005" name="J. Exp. Bot.">
        <title>The products of the broken Tm-2 and the durable Tm-2(2) resistance genes from tomato differ in four amino acids.</title>
        <authorList>
            <person name="Lanfermeijer F.C."/>
            <person name="Warmink J."/>
            <person name="Hille J."/>
        </authorList>
    </citation>
    <scope>FUNCTION</scope>
    <scope>MISCELLANEOUS</scope>
    <scope>GENE FAMILY</scope>
    <source>
        <strain>cv. Craigella GCR236</strain>
    </source>
</reference>
<reference key="10">
    <citation type="journal article" date="2007" name="Arch. Virol.">
        <title>The double-resistance-breaking Tomato mosaic virus strain ToMV1-2 contains two independent single resistance-breaking domains.</title>
        <authorList>
            <person name="Strasser M."/>
            <person name="Pfitzner A.J.P."/>
        </authorList>
    </citation>
    <scope>FUNCTION</scope>
    <source>
        <strain>cv. Craigella GCR236</strain>
        <strain>cv. Craigella GCR254</strain>
    </source>
</reference>
<reference key="11">
    <citation type="journal article" date="2011" name="J. Plant Physiol.">
        <title>Identification of an amino acid residue required for differential recognition of a viral movement protein by the Tomato mosaic virus resistance gene Tm-2(2).</title>
        <authorList>
            <person name="Kobayashi M."/>
            <person name="Yamamoto-Katou A."/>
            <person name="Katou S."/>
            <person name="Hirai K."/>
            <person name="Meshi T."/>
            <person name="Ohashi Y."/>
            <person name="Mitsuhara I."/>
        </authorList>
    </citation>
    <scope>FUNCTION</scope>
    <scope>SUBUNIT (MICROBIAL INFECTION)</scope>
</reference>
<reference key="12">
    <citation type="journal article" date="2017" name="Plant Pathol. J.">
        <title>Experimental infection of different tomato genotypes with tomato mosaic virus led to a low viral population heterogeneity in the capsid protein encoding region.</title>
        <authorList>
            <person name="Sihelska N."/>
            <person name="Vozarova Z."/>
            <person name="Predajna L."/>
            <person name="Soltys K."/>
            <person name="Hudcovicova M."/>
            <person name="Mihalik D."/>
            <person name="Kraic J."/>
            <person name="Mrkvova M."/>
            <person name="Kudela O."/>
            <person name="Glasa M."/>
        </authorList>
    </citation>
    <scope>FUNCTION</scope>
    <source>
        <strain>cv. Moperou</strain>
    </source>
</reference>
<reference key="13">
    <citation type="journal article" date="2017" name="PLoS ONE">
        <title>A new Israeli tobamovirus isolate infects tomato plants harboring Tm-2(2) resistance genes.</title>
        <authorList>
            <person name="Luria N."/>
            <person name="Smith E."/>
            <person name="Reingold V."/>
            <person name="Bekelman I."/>
            <person name="Lapidot M."/>
            <person name="Levin I."/>
            <person name="Elad N."/>
            <person name="Tam Y."/>
            <person name="Sela N."/>
            <person name="Abu-Ras A."/>
            <person name="Ezra N."/>
            <person name="Haberman A."/>
            <person name="Yitzhak L."/>
            <person name="Lachman O."/>
            <person name="Dombrovsky A."/>
        </authorList>
    </citation>
    <scope>FUNCTION</scope>
    <source>
        <strain>cv. Ikram</strain>
        <strain>cv. Mocimor</strain>
        <strain>cv. Momor</strain>
        <strain>cv. Momor verte</strain>
        <strain>cv. Moneymaker</strain>
        <strain>cv. Moperou</strain>
        <strain>cv. Mose</strain>
        <strain>cv. Vendor</strain>
    </source>
</reference>
<reference key="14">
    <citation type="journal article" date="2018" name="Arch. Virol.">
        <title>Using genomic analysis to identify tomato Tm-2 resistance-breaking mutations and their underlying evolutionary path in a new and emerging tobamovirus.</title>
        <authorList>
            <person name="Maayan Y."/>
            <person name="Pandaranayaka E.P.J."/>
            <person name="Srivastava D.A."/>
            <person name="Lapidot M."/>
            <person name="Levin I."/>
            <person name="Dombrovsky A."/>
            <person name="Harel A."/>
        </authorList>
    </citation>
    <scope>FUNCTION</scope>
</reference>
<dbReference type="EMBL" id="AF536200">
    <property type="protein sequence ID" value="AAQ10735.1"/>
    <property type="molecule type" value="Genomic_DNA"/>
</dbReference>
<dbReference type="EMBL" id="AY765394">
    <property type="protein sequence ID" value="AAV39528.1"/>
    <property type="molecule type" value="Genomic_DNA"/>
</dbReference>
<dbReference type="EMBL" id="FJ817598">
    <property type="protein sequence ID" value="ACO52371.1"/>
    <property type="molecule type" value="Genomic_DNA"/>
</dbReference>
<dbReference type="EMBL" id="FJ817604">
    <property type="protein sequence ID" value="ACO52377.1"/>
    <property type="molecule type" value="Genomic_DNA"/>
</dbReference>
<dbReference type="EMBL" id="FJ817605">
    <property type="protein sequence ID" value="ACO52378.1"/>
    <property type="molecule type" value="Genomic_DNA"/>
</dbReference>
<dbReference type="SMR" id="Q71BH0"/>
<dbReference type="STRING" id="4081.Q71BH0"/>
<dbReference type="InParanoid" id="Q71BH0"/>
<dbReference type="Proteomes" id="UP000004994">
    <property type="component" value="Unplaced"/>
</dbReference>
<dbReference type="ExpressionAtlas" id="Q71BH0">
    <property type="expression patterns" value="baseline and differential"/>
</dbReference>
<dbReference type="GO" id="GO:0005886">
    <property type="term" value="C:plasma membrane"/>
    <property type="evidence" value="ECO:0000250"/>
    <property type="project" value="UniProtKB"/>
</dbReference>
<dbReference type="GO" id="GO:0043531">
    <property type="term" value="F:ADP binding"/>
    <property type="evidence" value="ECO:0007669"/>
    <property type="project" value="InterPro"/>
</dbReference>
<dbReference type="GO" id="GO:0005524">
    <property type="term" value="F:ATP binding"/>
    <property type="evidence" value="ECO:0007669"/>
    <property type="project" value="UniProtKB-KW"/>
</dbReference>
<dbReference type="GO" id="GO:0016887">
    <property type="term" value="F:ATP hydrolysis activity"/>
    <property type="evidence" value="ECO:0007669"/>
    <property type="project" value="InterPro"/>
</dbReference>
<dbReference type="GO" id="GO:0098542">
    <property type="term" value="P:defense response to other organism"/>
    <property type="evidence" value="ECO:0000318"/>
    <property type="project" value="GO_Central"/>
</dbReference>
<dbReference type="GO" id="GO:0051607">
    <property type="term" value="P:defense response to virus"/>
    <property type="evidence" value="ECO:0000314"/>
    <property type="project" value="UniProtKB"/>
</dbReference>
<dbReference type="GO" id="GO:0009626">
    <property type="term" value="P:plant-type hypersensitive response"/>
    <property type="evidence" value="ECO:0000314"/>
    <property type="project" value="UniProtKB"/>
</dbReference>
<dbReference type="CDD" id="cd14798">
    <property type="entry name" value="RX-CC_like"/>
    <property type="match status" value="1"/>
</dbReference>
<dbReference type="FunFam" id="3.40.50.300:FF:001091">
    <property type="entry name" value="Probable disease resistance protein At1g61300"/>
    <property type="match status" value="1"/>
</dbReference>
<dbReference type="FunFam" id="1.10.10.10:FF:000322">
    <property type="entry name" value="Probable disease resistance protein At1g63360"/>
    <property type="match status" value="1"/>
</dbReference>
<dbReference type="Gene3D" id="1.20.5.4130">
    <property type="match status" value="1"/>
</dbReference>
<dbReference type="Gene3D" id="1.10.8.430">
    <property type="entry name" value="Helical domain of apoptotic protease-activating factors"/>
    <property type="match status" value="1"/>
</dbReference>
<dbReference type="Gene3D" id="3.40.50.300">
    <property type="entry name" value="P-loop containing nucleotide triphosphate hydrolases"/>
    <property type="match status" value="1"/>
</dbReference>
<dbReference type="Gene3D" id="3.80.10.10">
    <property type="entry name" value="Ribonuclease Inhibitor"/>
    <property type="match status" value="1"/>
</dbReference>
<dbReference type="Gene3D" id="1.10.10.10">
    <property type="entry name" value="Winged helix-like DNA-binding domain superfamily/Winged helix DNA-binding domain"/>
    <property type="match status" value="1"/>
</dbReference>
<dbReference type="InterPro" id="IPR003593">
    <property type="entry name" value="AAA+_ATPase"/>
</dbReference>
<dbReference type="InterPro" id="IPR042197">
    <property type="entry name" value="Apaf_helical"/>
</dbReference>
<dbReference type="InterPro" id="IPR044974">
    <property type="entry name" value="Disease_R_plants"/>
</dbReference>
<dbReference type="InterPro" id="IPR032675">
    <property type="entry name" value="LRR_dom_sf"/>
</dbReference>
<dbReference type="InterPro" id="IPR055414">
    <property type="entry name" value="LRR_R13L4/SHOC2-like"/>
</dbReference>
<dbReference type="InterPro" id="IPR002182">
    <property type="entry name" value="NB-ARC"/>
</dbReference>
<dbReference type="InterPro" id="IPR027417">
    <property type="entry name" value="P-loop_NTPase"/>
</dbReference>
<dbReference type="InterPro" id="IPR038005">
    <property type="entry name" value="RX-like_CC"/>
</dbReference>
<dbReference type="InterPro" id="IPR041118">
    <property type="entry name" value="Rx_N"/>
</dbReference>
<dbReference type="InterPro" id="IPR036388">
    <property type="entry name" value="WH-like_DNA-bd_sf"/>
</dbReference>
<dbReference type="PANTHER" id="PTHR23155">
    <property type="entry name" value="DISEASE RESISTANCE PROTEIN RP"/>
    <property type="match status" value="1"/>
</dbReference>
<dbReference type="PANTHER" id="PTHR23155:SF1238">
    <property type="entry name" value="TOMV SUSCEPTIBLE PROTEIN TM-2"/>
    <property type="match status" value="1"/>
</dbReference>
<dbReference type="Pfam" id="PF23598">
    <property type="entry name" value="LRR_14"/>
    <property type="match status" value="1"/>
</dbReference>
<dbReference type="Pfam" id="PF00931">
    <property type="entry name" value="NB-ARC"/>
    <property type="match status" value="1"/>
</dbReference>
<dbReference type="Pfam" id="PF18052">
    <property type="entry name" value="Rx_N"/>
    <property type="match status" value="1"/>
</dbReference>
<dbReference type="Pfam" id="PF23559">
    <property type="entry name" value="WH_DRP"/>
    <property type="match status" value="1"/>
</dbReference>
<dbReference type="PRINTS" id="PR00364">
    <property type="entry name" value="DISEASERSIST"/>
</dbReference>
<dbReference type="SMART" id="SM00382">
    <property type="entry name" value="AAA"/>
    <property type="match status" value="1"/>
</dbReference>
<dbReference type="SUPFAM" id="SSF52058">
    <property type="entry name" value="L domain-like"/>
    <property type="match status" value="1"/>
</dbReference>
<dbReference type="SUPFAM" id="SSF52540">
    <property type="entry name" value="P-loop containing nucleoside triphosphate hydrolases"/>
    <property type="match status" value="1"/>
</dbReference>
<keyword id="KW-0067">ATP-binding</keyword>
<keyword id="KW-1003">Cell membrane</keyword>
<keyword id="KW-0175">Coiled coil</keyword>
<keyword id="KW-0945">Host-virus interaction</keyword>
<keyword id="KW-0381">Hypersensitive response</keyword>
<keyword id="KW-0433">Leucine-rich repeat</keyword>
<keyword id="KW-0472">Membrane</keyword>
<keyword id="KW-0547">Nucleotide-binding</keyword>
<keyword id="KW-0611">Plant defense</keyword>
<keyword id="KW-1185">Reference proteome</keyword>
<keyword id="KW-0677">Repeat</keyword>
<organism>
    <name type="scientific">Solanum lycopersicum</name>
    <name type="common">Tomato</name>
    <name type="synonym">Lycopersicon esculentum</name>
    <dbReference type="NCBI Taxonomy" id="4081"/>
    <lineage>
        <taxon>Eukaryota</taxon>
        <taxon>Viridiplantae</taxon>
        <taxon>Streptophyta</taxon>
        <taxon>Embryophyta</taxon>
        <taxon>Tracheophyta</taxon>
        <taxon>Spermatophyta</taxon>
        <taxon>Magnoliopsida</taxon>
        <taxon>eudicotyledons</taxon>
        <taxon>Gunneridae</taxon>
        <taxon>Pentapetalae</taxon>
        <taxon>asterids</taxon>
        <taxon>lamiids</taxon>
        <taxon>Solanales</taxon>
        <taxon>Solanaceae</taxon>
        <taxon>Solanoideae</taxon>
        <taxon>Solaneae</taxon>
        <taxon>Solanum</taxon>
        <taxon>Solanum subgen. Lycopersicon</taxon>
    </lineage>
</organism>
<feature type="chain" id="PRO_0000448715" description="ToMV resistance protein Tm-2(GCR236)">
    <location>
        <begin position="1"/>
        <end position="861"/>
    </location>
</feature>
<feature type="domain" description="NB-ARC" evidence="2">
    <location>
        <begin position="162"/>
        <end position="388"/>
    </location>
</feature>
<feature type="repeat" description="LRR 1" evidence="2">
    <location>
        <begin position="225"/>
        <end position="248"/>
    </location>
</feature>
<feature type="repeat" description="LRR 2" evidence="2">
    <location>
        <begin position="305"/>
        <end position="327"/>
    </location>
</feature>
<feature type="repeat" description="LRR 3" evidence="2">
    <location>
        <begin position="388"/>
        <end position="411"/>
    </location>
</feature>
<feature type="repeat" description="LRR 4" evidence="2">
    <location>
        <begin position="449"/>
        <end position="472"/>
    </location>
</feature>
<feature type="repeat" description="LRR 5" evidence="2">
    <location>
        <begin position="510"/>
        <end position="536"/>
    </location>
</feature>
<feature type="repeat" description="LRR 6" evidence="2">
    <location>
        <begin position="585"/>
        <end position="608"/>
    </location>
</feature>
<feature type="repeat" description="LRR 7" evidence="2">
    <location>
        <begin position="609"/>
        <end position="631"/>
    </location>
</feature>
<feature type="repeat" description="LRR 8" evidence="2">
    <location>
        <begin position="652"/>
        <end position="680"/>
    </location>
</feature>
<feature type="repeat" description="LRR 9" evidence="2">
    <location>
        <begin position="689"/>
        <end position="710"/>
    </location>
</feature>
<feature type="repeat" description="LRR 10" evidence="2">
    <location>
        <begin position="712"/>
        <end position="735"/>
    </location>
</feature>
<feature type="repeat" description="LRR 11" evidence="2">
    <location>
        <begin position="736"/>
        <end position="758"/>
    </location>
</feature>
<feature type="repeat" description="LRR 12" evidence="2">
    <location>
        <begin position="784"/>
        <end position="810"/>
    </location>
</feature>
<feature type="repeat" description="LRR 13" evidence="2">
    <location>
        <begin position="811"/>
        <end position="835"/>
    </location>
</feature>
<feature type="coiled-coil region" evidence="2">
    <location>
        <begin position="63"/>
        <end position="83"/>
    </location>
</feature>
<feature type="binding site" evidence="2">
    <location>
        <begin position="185"/>
        <end position="192"/>
    </location>
    <ligand>
        <name>ATP</name>
        <dbReference type="ChEBI" id="CHEBI:30616"/>
    </ligand>
</feature>